<dbReference type="EC" id="1.5.1.5" evidence="1"/>
<dbReference type="EC" id="3.5.4.9" evidence="1"/>
<dbReference type="EMBL" id="CP000667">
    <property type="protein sequence ID" value="ABP56226.1"/>
    <property type="molecule type" value="Genomic_DNA"/>
</dbReference>
<dbReference type="RefSeq" id="WP_012015001.1">
    <property type="nucleotide sequence ID" value="NC_009380.1"/>
</dbReference>
<dbReference type="SMR" id="A4XBC7"/>
<dbReference type="STRING" id="369723.Strop_3795"/>
<dbReference type="KEGG" id="stp:Strop_3795"/>
<dbReference type="PATRIC" id="fig|369723.5.peg.3916"/>
<dbReference type="eggNOG" id="COG0190">
    <property type="taxonomic scope" value="Bacteria"/>
</dbReference>
<dbReference type="HOGENOM" id="CLU_034045_3_0_11"/>
<dbReference type="UniPathway" id="UPA00193"/>
<dbReference type="Proteomes" id="UP000000235">
    <property type="component" value="Chromosome"/>
</dbReference>
<dbReference type="GO" id="GO:0005829">
    <property type="term" value="C:cytosol"/>
    <property type="evidence" value="ECO:0007669"/>
    <property type="project" value="TreeGrafter"/>
</dbReference>
<dbReference type="GO" id="GO:0004477">
    <property type="term" value="F:methenyltetrahydrofolate cyclohydrolase activity"/>
    <property type="evidence" value="ECO:0007669"/>
    <property type="project" value="UniProtKB-UniRule"/>
</dbReference>
<dbReference type="GO" id="GO:0004488">
    <property type="term" value="F:methylenetetrahydrofolate dehydrogenase (NADP+) activity"/>
    <property type="evidence" value="ECO:0007669"/>
    <property type="project" value="UniProtKB-UniRule"/>
</dbReference>
<dbReference type="GO" id="GO:0000105">
    <property type="term" value="P:L-histidine biosynthetic process"/>
    <property type="evidence" value="ECO:0007669"/>
    <property type="project" value="UniProtKB-KW"/>
</dbReference>
<dbReference type="GO" id="GO:0009086">
    <property type="term" value="P:methionine biosynthetic process"/>
    <property type="evidence" value="ECO:0007669"/>
    <property type="project" value="UniProtKB-KW"/>
</dbReference>
<dbReference type="GO" id="GO:0006164">
    <property type="term" value="P:purine nucleotide biosynthetic process"/>
    <property type="evidence" value="ECO:0007669"/>
    <property type="project" value="UniProtKB-KW"/>
</dbReference>
<dbReference type="GO" id="GO:0035999">
    <property type="term" value="P:tetrahydrofolate interconversion"/>
    <property type="evidence" value="ECO:0007669"/>
    <property type="project" value="UniProtKB-UniRule"/>
</dbReference>
<dbReference type="CDD" id="cd01080">
    <property type="entry name" value="NAD_bind_m-THF_DH_Cyclohyd"/>
    <property type="match status" value="1"/>
</dbReference>
<dbReference type="FunFam" id="3.40.50.10860:FF:000005">
    <property type="entry name" value="C-1-tetrahydrofolate synthase, cytoplasmic, putative"/>
    <property type="match status" value="1"/>
</dbReference>
<dbReference type="Gene3D" id="3.40.50.10860">
    <property type="entry name" value="Leucine Dehydrogenase, chain A, domain 1"/>
    <property type="match status" value="1"/>
</dbReference>
<dbReference type="Gene3D" id="3.40.50.720">
    <property type="entry name" value="NAD(P)-binding Rossmann-like Domain"/>
    <property type="match status" value="1"/>
</dbReference>
<dbReference type="HAMAP" id="MF_01576">
    <property type="entry name" value="THF_DHG_CYH"/>
    <property type="match status" value="1"/>
</dbReference>
<dbReference type="InterPro" id="IPR046346">
    <property type="entry name" value="Aminoacid_DH-like_N_sf"/>
</dbReference>
<dbReference type="InterPro" id="IPR036291">
    <property type="entry name" value="NAD(P)-bd_dom_sf"/>
</dbReference>
<dbReference type="InterPro" id="IPR000672">
    <property type="entry name" value="THF_DH/CycHdrlase"/>
</dbReference>
<dbReference type="InterPro" id="IPR020630">
    <property type="entry name" value="THF_DH/CycHdrlase_cat_dom"/>
</dbReference>
<dbReference type="InterPro" id="IPR020631">
    <property type="entry name" value="THF_DH/CycHdrlase_NAD-bd_dom"/>
</dbReference>
<dbReference type="NCBIfam" id="NF010789">
    <property type="entry name" value="PRK14193.1"/>
    <property type="match status" value="1"/>
</dbReference>
<dbReference type="PANTHER" id="PTHR48099:SF5">
    <property type="entry name" value="C-1-TETRAHYDROFOLATE SYNTHASE, CYTOPLASMIC"/>
    <property type="match status" value="1"/>
</dbReference>
<dbReference type="PANTHER" id="PTHR48099">
    <property type="entry name" value="C-1-TETRAHYDROFOLATE SYNTHASE, CYTOPLASMIC-RELATED"/>
    <property type="match status" value="1"/>
</dbReference>
<dbReference type="Pfam" id="PF00763">
    <property type="entry name" value="THF_DHG_CYH"/>
    <property type="match status" value="1"/>
</dbReference>
<dbReference type="Pfam" id="PF02882">
    <property type="entry name" value="THF_DHG_CYH_C"/>
    <property type="match status" value="1"/>
</dbReference>
<dbReference type="PRINTS" id="PR00085">
    <property type="entry name" value="THFDHDRGNASE"/>
</dbReference>
<dbReference type="SUPFAM" id="SSF53223">
    <property type="entry name" value="Aminoacid dehydrogenase-like, N-terminal domain"/>
    <property type="match status" value="1"/>
</dbReference>
<dbReference type="SUPFAM" id="SSF51735">
    <property type="entry name" value="NAD(P)-binding Rossmann-fold domains"/>
    <property type="match status" value="1"/>
</dbReference>
<organism>
    <name type="scientific">Salinispora tropica (strain ATCC BAA-916 / DSM 44818 / JCM 13857 / NBRC 105044 / CNB-440)</name>
    <dbReference type="NCBI Taxonomy" id="369723"/>
    <lineage>
        <taxon>Bacteria</taxon>
        <taxon>Bacillati</taxon>
        <taxon>Actinomycetota</taxon>
        <taxon>Actinomycetes</taxon>
        <taxon>Micromonosporales</taxon>
        <taxon>Micromonosporaceae</taxon>
        <taxon>Salinispora</taxon>
    </lineage>
</organism>
<name>FOLD2_SALTO</name>
<proteinExistence type="inferred from homology"/>
<sequence length="286" mass="29801">MTATLLDGKATAAEIKDELRVRVKALAERGVTPGLGTVLVGADPGSQAYVNGKHRDCAEVGVASLRRELPTDATQEQVDAVLADLNNDPACHGYIVQLPLPAHLDTQRVLELIDPDKDADGLHPVNLGRLVLGYPGPLPCTPRGIVELLRRHDVALRGARVVVIGRGNTVGRPLGLLLTRRSENATVTLCHTGTLDLTAHTRAADIVIVAAGVPGLLTSDMITPGAVVVDVGITRVIGPDGKGRYTGDVDPGVGEVAGALVPMPGGVGPMTRAMLLTNVVERAERG</sequence>
<accession>A4XBC7</accession>
<reference key="1">
    <citation type="journal article" date="2007" name="Proc. Natl. Acad. Sci. U.S.A.">
        <title>Genome sequencing reveals complex secondary metabolome in the marine actinomycete Salinispora tropica.</title>
        <authorList>
            <person name="Udwary D.W."/>
            <person name="Zeigler L."/>
            <person name="Asolkar R.N."/>
            <person name="Singan V."/>
            <person name="Lapidus A."/>
            <person name="Fenical W."/>
            <person name="Jensen P.R."/>
            <person name="Moore B.S."/>
        </authorList>
    </citation>
    <scope>NUCLEOTIDE SEQUENCE [LARGE SCALE GENOMIC DNA]</scope>
    <source>
        <strain>ATCC BAA-916 / DSM 44818 / JCM 13857 / NBRC 105044 / CNB-440</strain>
    </source>
</reference>
<evidence type="ECO:0000255" key="1">
    <source>
        <dbReference type="HAMAP-Rule" id="MF_01576"/>
    </source>
</evidence>
<feature type="chain" id="PRO_0000340596" description="Bifunctional protein FolD 2">
    <location>
        <begin position="1"/>
        <end position="286"/>
    </location>
</feature>
<feature type="binding site" evidence="1">
    <location>
        <begin position="165"/>
        <end position="167"/>
    </location>
    <ligand>
        <name>NADP(+)</name>
        <dbReference type="ChEBI" id="CHEBI:58349"/>
    </ligand>
</feature>
<feature type="binding site" evidence="1">
    <location>
        <position position="192"/>
    </location>
    <ligand>
        <name>NADP(+)</name>
        <dbReference type="ChEBI" id="CHEBI:58349"/>
    </ligand>
</feature>
<feature type="binding site" evidence="1">
    <location>
        <position position="233"/>
    </location>
    <ligand>
        <name>NADP(+)</name>
        <dbReference type="ChEBI" id="CHEBI:58349"/>
    </ligand>
</feature>
<keyword id="KW-0028">Amino-acid biosynthesis</keyword>
<keyword id="KW-0368">Histidine biosynthesis</keyword>
<keyword id="KW-0378">Hydrolase</keyword>
<keyword id="KW-0486">Methionine biosynthesis</keyword>
<keyword id="KW-0511">Multifunctional enzyme</keyword>
<keyword id="KW-0521">NADP</keyword>
<keyword id="KW-0554">One-carbon metabolism</keyword>
<keyword id="KW-0560">Oxidoreductase</keyword>
<keyword id="KW-0658">Purine biosynthesis</keyword>
<keyword id="KW-1185">Reference proteome</keyword>
<protein>
    <recommendedName>
        <fullName evidence="1">Bifunctional protein FolD 2</fullName>
    </recommendedName>
    <domain>
        <recommendedName>
            <fullName evidence="1">Methylenetetrahydrofolate dehydrogenase</fullName>
            <ecNumber evidence="1">1.5.1.5</ecNumber>
        </recommendedName>
    </domain>
    <domain>
        <recommendedName>
            <fullName evidence="1">Methenyltetrahydrofolate cyclohydrolase</fullName>
            <ecNumber evidence="1">3.5.4.9</ecNumber>
        </recommendedName>
    </domain>
</protein>
<comment type="function">
    <text evidence="1">Catalyzes the oxidation of 5,10-methylenetetrahydrofolate to 5,10-methenyltetrahydrofolate and then the hydrolysis of 5,10-methenyltetrahydrofolate to 10-formyltetrahydrofolate.</text>
</comment>
<comment type="catalytic activity">
    <reaction evidence="1">
        <text>(6R)-5,10-methylene-5,6,7,8-tetrahydrofolate + NADP(+) = (6R)-5,10-methenyltetrahydrofolate + NADPH</text>
        <dbReference type="Rhea" id="RHEA:22812"/>
        <dbReference type="ChEBI" id="CHEBI:15636"/>
        <dbReference type="ChEBI" id="CHEBI:57455"/>
        <dbReference type="ChEBI" id="CHEBI:57783"/>
        <dbReference type="ChEBI" id="CHEBI:58349"/>
        <dbReference type="EC" id="1.5.1.5"/>
    </reaction>
</comment>
<comment type="catalytic activity">
    <reaction evidence="1">
        <text>(6R)-5,10-methenyltetrahydrofolate + H2O = (6R)-10-formyltetrahydrofolate + H(+)</text>
        <dbReference type="Rhea" id="RHEA:23700"/>
        <dbReference type="ChEBI" id="CHEBI:15377"/>
        <dbReference type="ChEBI" id="CHEBI:15378"/>
        <dbReference type="ChEBI" id="CHEBI:57455"/>
        <dbReference type="ChEBI" id="CHEBI:195366"/>
        <dbReference type="EC" id="3.5.4.9"/>
    </reaction>
</comment>
<comment type="pathway">
    <text evidence="1">One-carbon metabolism; tetrahydrofolate interconversion.</text>
</comment>
<comment type="subunit">
    <text evidence="1">Homodimer.</text>
</comment>
<comment type="similarity">
    <text evidence="1">Belongs to the tetrahydrofolate dehydrogenase/cyclohydrolase family.</text>
</comment>
<gene>
    <name evidence="1" type="primary">folD2</name>
    <name type="ordered locus">Strop_3795</name>
</gene>